<evidence type="ECO:0000250" key="1">
    <source>
        <dbReference type="UniProtKB" id="P23301"/>
    </source>
</evidence>
<evidence type="ECO:0000250" key="2">
    <source>
        <dbReference type="UniProtKB" id="Q9XI91"/>
    </source>
</evidence>
<evidence type="ECO:0000256" key="3">
    <source>
        <dbReference type="SAM" id="MobiDB-lite"/>
    </source>
</evidence>
<evidence type="ECO:0000305" key="4"/>
<reference key="1">
    <citation type="journal article" date="1991" name="Plant Mol. Biol.">
        <title>Isolation and sequence determination of the plant homologue of the eukaryotic initiation factor 4D cDNA from alfalfa, Medicago sativa.</title>
        <authorList>
            <person name="Pay A."/>
            <person name="Heberle-Bors E."/>
            <person name="Hirt H."/>
        </authorList>
    </citation>
    <scope>NUCLEOTIDE SEQUENCE [MRNA]</scope>
</reference>
<keyword id="KW-0385">Hypusine</keyword>
<keyword id="KW-0396">Initiation factor</keyword>
<keyword id="KW-0648">Protein biosynthesis</keyword>
<comment type="function">
    <text evidence="1">Translation factor that promotes translation elongation and termination, particularly upon ribosome stalling at specific amino acid sequence contexts (By similarity). Binds between the exit (E) and peptidyl (P) site of the ribosome and promotes rescue of stalled ribosome: specifically required for efficient translation of polyproline-containing peptides as well as other motifs that stall the ribosome (By similarity). Acts as a ribosome quality control (RQC) cofactor by joining the RQC complex to facilitate peptidyl transfer during CAT tailing step (By similarity).</text>
</comment>
<comment type="PTM">
    <text evidence="2">Lys-52 undergoes hypusination, a unique post-translational modification that consists in the addition of a butylamino group from spermidine to lysine side chain, leading to the formation of the unusual amino acid hypusine. eIF-5As are the only known proteins to undergo this modification, which is essential for their function.</text>
</comment>
<comment type="similarity">
    <text evidence="4">Belongs to the eIF-5A family.</text>
</comment>
<name>IF5A1_MEDSA</name>
<dbReference type="EMBL" id="X59441">
    <property type="protein sequence ID" value="CAA42065.1"/>
    <property type="molecule type" value="mRNA"/>
</dbReference>
<dbReference type="PIR" id="S17736">
    <property type="entry name" value="FIAAA"/>
</dbReference>
<dbReference type="SMR" id="P26564"/>
<dbReference type="GO" id="GO:0043022">
    <property type="term" value="F:ribosome binding"/>
    <property type="evidence" value="ECO:0007669"/>
    <property type="project" value="InterPro"/>
</dbReference>
<dbReference type="GO" id="GO:0003723">
    <property type="term" value="F:RNA binding"/>
    <property type="evidence" value="ECO:0007669"/>
    <property type="project" value="InterPro"/>
</dbReference>
<dbReference type="GO" id="GO:0003746">
    <property type="term" value="F:translation elongation factor activity"/>
    <property type="evidence" value="ECO:0007669"/>
    <property type="project" value="InterPro"/>
</dbReference>
<dbReference type="GO" id="GO:0003743">
    <property type="term" value="F:translation initiation factor activity"/>
    <property type="evidence" value="ECO:0007669"/>
    <property type="project" value="UniProtKB-KW"/>
</dbReference>
<dbReference type="GO" id="GO:0045901">
    <property type="term" value="P:positive regulation of translational elongation"/>
    <property type="evidence" value="ECO:0007669"/>
    <property type="project" value="InterPro"/>
</dbReference>
<dbReference type="GO" id="GO:0045905">
    <property type="term" value="P:positive regulation of translational termination"/>
    <property type="evidence" value="ECO:0007669"/>
    <property type="project" value="InterPro"/>
</dbReference>
<dbReference type="CDD" id="cd04468">
    <property type="entry name" value="S1_eIF5A"/>
    <property type="match status" value="1"/>
</dbReference>
<dbReference type="FunFam" id="2.30.30.30:FF:000012">
    <property type="entry name" value="Eukaryotic translation initiation factor 5A"/>
    <property type="match status" value="1"/>
</dbReference>
<dbReference type="FunFam" id="2.40.50.140:FF:000034">
    <property type="entry name" value="Eukaryotic translation initiation factor 5A"/>
    <property type="match status" value="1"/>
</dbReference>
<dbReference type="Gene3D" id="2.30.30.30">
    <property type="match status" value="1"/>
</dbReference>
<dbReference type="Gene3D" id="2.40.50.140">
    <property type="entry name" value="Nucleic acid-binding proteins"/>
    <property type="match status" value="1"/>
</dbReference>
<dbReference type="InterPro" id="IPR001884">
    <property type="entry name" value="IF5A-like"/>
</dbReference>
<dbReference type="InterPro" id="IPR048670">
    <property type="entry name" value="IF5A-like_N"/>
</dbReference>
<dbReference type="InterPro" id="IPR012340">
    <property type="entry name" value="NA-bd_OB-fold"/>
</dbReference>
<dbReference type="InterPro" id="IPR014722">
    <property type="entry name" value="Rib_uL2_dom2"/>
</dbReference>
<dbReference type="InterPro" id="IPR019769">
    <property type="entry name" value="Trans_elong_IF5A_hypusine_site"/>
</dbReference>
<dbReference type="InterPro" id="IPR020189">
    <property type="entry name" value="Transl_elong_IF5A_C"/>
</dbReference>
<dbReference type="InterPro" id="IPR008991">
    <property type="entry name" value="Translation_prot_SH3-like_sf"/>
</dbReference>
<dbReference type="NCBIfam" id="TIGR00037">
    <property type="entry name" value="eIF_5A"/>
    <property type="match status" value="1"/>
</dbReference>
<dbReference type="PANTHER" id="PTHR11673">
    <property type="entry name" value="TRANSLATION INITIATION FACTOR 5A FAMILY MEMBER"/>
    <property type="match status" value="1"/>
</dbReference>
<dbReference type="Pfam" id="PF01287">
    <property type="entry name" value="eIF-5a"/>
    <property type="match status" value="1"/>
</dbReference>
<dbReference type="Pfam" id="PF21485">
    <property type="entry name" value="IF5A-like_N"/>
    <property type="match status" value="1"/>
</dbReference>
<dbReference type="PIRSF" id="PIRSF003025">
    <property type="entry name" value="eIF5A"/>
    <property type="match status" value="1"/>
</dbReference>
<dbReference type="SMART" id="SM01376">
    <property type="entry name" value="eIF-5a"/>
    <property type="match status" value="1"/>
</dbReference>
<dbReference type="SUPFAM" id="SSF50249">
    <property type="entry name" value="Nucleic acid-binding proteins"/>
    <property type="match status" value="1"/>
</dbReference>
<dbReference type="SUPFAM" id="SSF50104">
    <property type="entry name" value="Translation proteins SH3-like domain"/>
    <property type="match status" value="1"/>
</dbReference>
<dbReference type="PROSITE" id="PS00302">
    <property type="entry name" value="IF5A_HYPUSINE"/>
    <property type="match status" value="1"/>
</dbReference>
<accession>P26564</accession>
<organism>
    <name type="scientific">Medicago sativa</name>
    <name type="common">Alfalfa</name>
    <dbReference type="NCBI Taxonomy" id="3879"/>
    <lineage>
        <taxon>Eukaryota</taxon>
        <taxon>Viridiplantae</taxon>
        <taxon>Streptophyta</taxon>
        <taxon>Embryophyta</taxon>
        <taxon>Tracheophyta</taxon>
        <taxon>Spermatophyta</taxon>
        <taxon>Magnoliopsida</taxon>
        <taxon>eudicotyledons</taxon>
        <taxon>Gunneridae</taxon>
        <taxon>Pentapetalae</taxon>
        <taxon>rosids</taxon>
        <taxon>fabids</taxon>
        <taxon>Fabales</taxon>
        <taxon>Fabaceae</taxon>
        <taxon>Papilionoideae</taxon>
        <taxon>50 kb inversion clade</taxon>
        <taxon>NPAAA clade</taxon>
        <taxon>Hologalegina</taxon>
        <taxon>IRL clade</taxon>
        <taxon>Trifolieae</taxon>
        <taxon>Medicago</taxon>
    </lineage>
</organism>
<proteinExistence type="evidence at transcript level"/>
<sequence>MSDEEHQFESKADAGASKTYPQQAGTIRKNGYIVIKNRPCKVVEVSTSKTGKHGHAKCHFVAIDIFTSKKLEEVYVPSSHNCDVPHVNRTDYQLIDISEDGFVSLLTENGNTKDDLKLPTDDSLLTQIKDGFAEGKDLVVSVMSAMGEEQICALKDIGGKN</sequence>
<protein>
    <recommendedName>
        <fullName>Eukaryotic translation initiation factor 5A-1</fullName>
        <shortName>eIF-5A-1</shortName>
    </recommendedName>
    <alternativeName>
        <fullName>eIF-4D</fullName>
    </alternativeName>
</protein>
<feature type="chain" id="PRO_0000142473" description="Eukaryotic translation initiation factor 5A-1">
    <location>
        <begin position="1"/>
        <end position="161"/>
    </location>
</feature>
<feature type="region of interest" description="Disordered" evidence="3">
    <location>
        <begin position="1"/>
        <end position="21"/>
    </location>
</feature>
<feature type="compositionally biased region" description="Basic and acidic residues" evidence="3">
    <location>
        <begin position="1"/>
        <end position="12"/>
    </location>
</feature>
<feature type="modified residue" description="Hypusine" evidence="2">
    <location>
        <position position="52"/>
    </location>
</feature>